<name>DSBE_VIBCH</name>
<keyword id="KW-0997">Cell inner membrane</keyword>
<keyword id="KW-1003">Cell membrane</keyword>
<keyword id="KW-0201">Cytochrome c-type biogenesis</keyword>
<keyword id="KW-1015">Disulfide bond</keyword>
<keyword id="KW-0472">Membrane</keyword>
<keyword id="KW-0676">Redox-active center</keyword>
<keyword id="KW-1185">Reference proteome</keyword>
<keyword id="KW-0812">Transmembrane</keyword>
<keyword id="KW-1133">Transmembrane helix</keyword>
<gene>
    <name type="primary">dsbE</name>
    <name type="synonym">ccmG</name>
    <name type="ordered locus">VC_2051</name>
</gene>
<evidence type="ECO:0000250" key="1"/>
<evidence type="ECO:0000255" key="2"/>
<evidence type="ECO:0000255" key="3">
    <source>
        <dbReference type="PROSITE-ProRule" id="PRU00691"/>
    </source>
</evidence>
<evidence type="ECO:0000305" key="4"/>
<reference key="1">
    <citation type="journal article" date="2000" name="Nature">
        <title>DNA sequence of both chromosomes of the cholera pathogen Vibrio cholerae.</title>
        <authorList>
            <person name="Heidelberg J.F."/>
            <person name="Eisen J.A."/>
            <person name="Nelson W.C."/>
            <person name="Clayton R.A."/>
            <person name="Gwinn M.L."/>
            <person name="Dodson R.J."/>
            <person name="Haft D.H."/>
            <person name="Hickey E.K."/>
            <person name="Peterson J.D."/>
            <person name="Umayam L.A."/>
            <person name="Gill S.R."/>
            <person name="Nelson K.E."/>
            <person name="Read T.D."/>
            <person name="Tettelin H."/>
            <person name="Richardson D.L."/>
            <person name="Ermolaeva M.D."/>
            <person name="Vamathevan J.J."/>
            <person name="Bass S."/>
            <person name="Qin H."/>
            <person name="Dragoi I."/>
            <person name="Sellers P."/>
            <person name="McDonald L.A."/>
            <person name="Utterback T.R."/>
            <person name="Fleischmann R.D."/>
            <person name="Nierman W.C."/>
            <person name="White O."/>
            <person name="Salzberg S.L."/>
            <person name="Smith H.O."/>
            <person name="Colwell R.R."/>
            <person name="Mekalanos J.J."/>
            <person name="Venter J.C."/>
            <person name="Fraser C.M."/>
        </authorList>
    </citation>
    <scope>NUCLEOTIDE SEQUENCE [LARGE SCALE GENOMIC DNA]</scope>
    <source>
        <strain>ATCC 39315 / El Tor Inaba N16961</strain>
    </source>
</reference>
<accession>Q9KQE9</accession>
<dbReference type="EMBL" id="AE003852">
    <property type="protein sequence ID" value="AAF95197.1"/>
    <property type="molecule type" value="Genomic_DNA"/>
</dbReference>
<dbReference type="PIR" id="E82124">
    <property type="entry name" value="E82124"/>
</dbReference>
<dbReference type="RefSeq" id="NP_231683.1">
    <property type="nucleotide sequence ID" value="NC_002505.1"/>
</dbReference>
<dbReference type="RefSeq" id="WP_001035064.1">
    <property type="nucleotide sequence ID" value="NZ_LT906614.1"/>
</dbReference>
<dbReference type="SMR" id="Q9KQE9"/>
<dbReference type="STRING" id="243277.VC_2051"/>
<dbReference type="DNASU" id="2613431"/>
<dbReference type="EnsemblBacteria" id="AAF95197">
    <property type="protein sequence ID" value="AAF95197"/>
    <property type="gene ID" value="VC_2051"/>
</dbReference>
<dbReference type="KEGG" id="vch:VC_2051"/>
<dbReference type="PATRIC" id="fig|243277.26.peg.1960"/>
<dbReference type="eggNOG" id="COG0526">
    <property type="taxonomic scope" value="Bacteria"/>
</dbReference>
<dbReference type="HOGENOM" id="CLU_042529_19_1_6"/>
<dbReference type="Proteomes" id="UP000000584">
    <property type="component" value="Chromosome 1"/>
</dbReference>
<dbReference type="GO" id="GO:0030288">
    <property type="term" value="C:outer membrane-bounded periplasmic space"/>
    <property type="evidence" value="ECO:0007669"/>
    <property type="project" value="InterPro"/>
</dbReference>
<dbReference type="GO" id="GO:0005886">
    <property type="term" value="C:plasma membrane"/>
    <property type="evidence" value="ECO:0007669"/>
    <property type="project" value="UniProtKB-SubCell"/>
</dbReference>
<dbReference type="GO" id="GO:0015036">
    <property type="term" value="F:disulfide oxidoreductase activity"/>
    <property type="evidence" value="ECO:0007669"/>
    <property type="project" value="InterPro"/>
</dbReference>
<dbReference type="GO" id="GO:0017004">
    <property type="term" value="P:cytochrome complex assembly"/>
    <property type="evidence" value="ECO:0007669"/>
    <property type="project" value="UniProtKB-KW"/>
</dbReference>
<dbReference type="CDD" id="cd03010">
    <property type="entry name" value="TlpA_like_DsbE"/>
    <property type="match status" value="1"/>
</dbReference>
<dbReference type="Gene3D" id="3.40.30.10">
    <property type="entry name" value="Glutaredoxin"/>
    <property type="match status" value="1"/>
</dbReference>
<dbReference type="InterPro" id="IPR004799">
    <property type="entry name" value="Periplasmic_diS_OxRdtase_DsbE"/>
</dbReference>
<dbReference type="InterPro" id="IPR013740">
    <property type="entry name" value="Redoxin"/>
</dbReference>
<dbReference type="InterPro" id="IPR036249">
    <property type="entry name" value="Thioredoxin-like_sf"/>
</dbReference>
<dbReference type="InterPro" id="IPR017937">
    <property type="entry name" value="Thioredoxin_CS"/>
</dbReference>
<dbReference type="InterPro" id="IPR013766">
    <property type="entry name" value="Thioredoxin_domain"/>
</dbReference>
<dbReference type="InterPro" id="IPR050553">
    <property type="entry name" value="Thioredoxin_ResA/DsbE_sf"/>
</dbReference>
<dbReference type="NCBIfam" id="TIGR00385">
    <property type="entry name" value="dsbE"/>
    <property type="match status" value="1"/>
</dbReference>
<dbReference type="PANTHER" id="PTHR42852">
    <property type="entry name" value="THIOL:DISULFIDE INTERCHANGE PROTEIN DSBE"/>
    <property type="match status" value="1"/>
</dbReference>
<dbReference type="PANTHER" id="PTHR42852:SF6">
    <property type="entry name" value="THIOL:DISULFIDE INTERCHANGE PROTEIN DSBE"/>
    <property type="match status" value="1"/>
</dbReference>
<dbReference type="Pfam" id="PF08534">
    <property type="entry name" value="Redoxin"/>
    <property type="match status" value="1"/>
</dbReference>
<dbReference type="SUPFAM" id="SSF52833">
    <property type="entry name" value="Thioredoxin-like"/>
    <property type="match status" value="1"/>
</dbReference>
<dbReference type="PROSITE" id="PS00194">
    <property type="entry name" value="THIOREDOXIN_1"/>
    <property type="match status" value="1"/>
</dbReference>
<dbReference type="PROSITE" id="PS51352">
    <property type="entry name" value="THIOREDOXIN_2"/>
    <property type="match status" value="1"/>
</dbReference>
<protein>
    <recommendedName>
        <fullName>Thiol:disulfide interchange protein DsbE</fullName>
    </recommendedName>
    <alternativeName>
        <fullName>Cytochrome c biogenesis protein CcmG</fullName>
    </alternativeName>
</protein>
<proteinExistence type="inferred from homology"/>
<feature type="chain" id="PRO_0000201303" description="Thiol:disulfide interchange protein DsbE">
    <location>
        <begin position="1"/>
        <end position="184"/>
    </location>
</feature>
<feature type="topological domain" description="Cytoplasmic" evidence="2">
    <location>
        <begin position="1"/>
        <end position="4"/>
    </location>
</feature>
<feature type="transmembrane region" description="Helical" evidence="2">
    <location>
        <begin position="5"/>
        <end position="25"/>
    </location>
</feature>
<feature type="topological domain" description="Periplasmic" evidence="2">
    <location>
        <begin position="26"/>
        <end position="184"/>
    </location>
</feature>
<feature type="domain" description="Thioredoxin" evidence="3">
    <location>
        <begin position="39"/>
        <end position="176"/>
    </location>
</feature>
<feature type="disulfide bond" description="Redox-active" evidence="3">
    <location>
        <begin position="79"/>
        <end position="82"/>
    </location>
</feature>
<organism>
    <name type="scientific">Vibrio cholerae serotype O1 (strain ATCC 39315 / El Tor Inaba N16961)</name>
    <dbReference type="NCBI Taxonomy" id="243277"/>
    <lineage>
        <taxon>Bacteria</taxon>
        <taxon>Pseudomonadati</taxon>
        <taxon>Pseudomonadota</taxon>
        <taxon>Gammaproteobacteria</taxon>
        <taxon>Vibrionales</taxon>
        <taxon>Vibrionaceae</taxon>
        <taxon>Vibrio</taxon>
    </lineage>
</organism>
<sequence>MNKKILFIPLVAFLLLAGVFATQLMKNSAGDDPTKLESVLVGKTVPEFRLEDLAEPGKLYDQSIFKGEPLLLNVWATWCPTCYAEHQYLNELAKQGVKIIGLNYKDQRDKATQWLNDLGNPYLISLFDGNGMLGLDLGVYGAPETFLIDANGVIRYRHVGDVNSRNWQETLAPLYEKMLAEAKQ</sequence>
<comment type="function">
    <text evidence="1">Involved in disulfide bond formation. Catalyzes a late, reductive step in the assembly of periplasmic c-type cytochromes, probably the reduction of disulfide bonds of the apocytochrome c to allow covalent linkage with the heme. Possible subunit of a heme lyase (By similarity).</text>
</comment>
<comment type="subcellular location">
    <subcellularLocation>
        <location evidence="1">Cell inner membrane</location>
        <topology evidence="1">Single-pass membrane protein</topology>
        <orientation evidence="1">Periplasmic side</orientation>
    </subcellularLocation>
</comment>
<comment type="similarity">
    <text evidence="4">Belongs to the thioredoxin family. DsbE subfamily.</text>
</comment>